<proteinExistence type="inferred from homology"/>
<sequence length="230" mass="25767">MGQKVHPNGIRLGITKPWISTWYADKSDYASNLNSDWEVRKFLVEKLQAASVSKIVIERPAKSIRVTIHTARPGVVIGKKGEDVEVLRAAVSKLAGTPAQINIAEIRKPELDAKLVADSIAQQLERRVMFRRAMKRAVQNAMRIGAQGIKVQVSGRLGGAEIARDEWYREGRVPLHTLRADIDYSTSESHTQYGVIGVKVWIFKGEVLDGMLPQIEEPKQQQPKRKPRGK</sequence>
<organism>
    <name type="scientific">Shewanella baltica (strain OS185)</name>
    <dbReference type="NCBI Taxonomy" id="402882"/>
    <lineage>
        <taxon>Bacteria</taxon>
        <taxon>Pseudomonadati</taxon>
        <taxon>Pseudomonadota</taxon>
        <taxon>Gammaproteobacteria</taxon>
        <taxon>Alteromonadales</taxon>
        <taxon>Shewanellaceae</taxon>
        <taxon>Shewanella</taxon>
    </lineage>
</organism>
<feature type="chain" id="PRO_1000086158" description="Small ribosomal subunit protein uS3">
    <location>
        <begin position="1"/>
        <end position="230"/>
    </location>
</feature>
<feature type="domain" description="KH type-2" evidence="1">
    <location>
        <begin position="39"/>
        <end position="107"/>
    </location>
</feature>
<evidence type="ECO:0000255" key="1">
    <source>
        <dbReference type="HAMAP-Rule" id="MF_01309"/>
    </source>
</evidence>
<evidence type="ECO:0000305" key="2"/>
<keyword id="KW-0687">Ribonucleoprotein</keyword>
<keyword id="KW-0689">Ribosomal protein</keyword>
<keyword id="KW-0694">RNA-binding</keyword>
<keyword id="KW-0699">rRNA-binding</keyword>
<accession>A6WHT4</accession>
<name>RS3_SHEB8</name>
<comment type="function">
    <text evidence="1">Binds the lower part of the 30S subunit head. Binds mRNA in the 70S ribosome, positioning it for translation.</text>
</comment>
<comment type="subunit">
    <text evidence="1">Part of the 30S ribosomal subunit. Forms a tight complex with proteins S10 and S14.</text>
</comment>
<comment type="similarity">
    <text evidence="1">Belongs to the universal ribosomal protein uS3 family.</text>
</comment>
<gene>
    <name evidence="1" type="primary">rpsC</name>
    <name type="ordered locus">Shew185_0202</name>
</gene>
<protein>
    <recommendedName>
        <fullName evidence="1">Small ribosomal subunit protein uS3</fullName>
    </recommendedName>
    <alternativeName>
        <fullName evidence="2">30S ribosomal protein S3</fullName>
    </alternativeName>
</protein>
<reference key="1">
    <citation type="submission" date="2007-07" db="EMBL/GenBank/DDBJ databases">
        <title>Complete sequence of chromosome of Shewanella baltica OS185.</title>
        <authorList>
            <consortium name="US DOE Joint Genome Institute"/>
            <person name="Copeland A."/>
            <person name="Lucas S."/>
            <person name="Lapidus A."/>
            <person name="Barry K."/>
            <person name="Glavina del Rio T."/>
            <person name="Dalin E."/>
            <person name="Tice H."/>
            <person name="Pitluck S."/>
            <person name="Sims D."/>
            <person name="Brettin T."/>
            <person name="Bruce D."/>
            <person name="Detter J.C."/>
            <person name="Han C."/>
            <person name="Schmutz J."/>
            <person name="Larimer F."/>
            <person name="Land M."/>
            <person name="Hauser L."/>
            <person name="Kyrpides N."/>
            <person name="Mikhailova N."/>
            <person name="Brettar I."/>
            <person name="Rodrigues J."/>
            <person name="Konstantinidis K."/>
            <person name="Tiedje J."/>
            <person name="Richardson P."/>
        </authorList>
    </citation>
    <scope>NUCLEOTIDE SEQUENCE [LARGE SCALE GENOMIC DNA]</scope>
    <source>
        <strain>OS185</strain>
    </source>
</reference>
<dbReference type="EMBL" id="CP000753">
    <property type="protein sequence ID" value="ABS06373.1"/>
    <property type="molecule type" value="Genomic_DNA"/>
</dbReference>
<dbReference type="RefSeq" id="WP_006083594.1">
    <property type="nucleotide sequence ID" value="NC_009665.1"/>
</dbReference>
<dbReference type="SMR" id="A6WHT4"/>
<dbReference type="GeneID" id="11774508"/>
<dbReference type="KEGG" id="sbm:Shew185_0202"/>
<dbReference type="HOGENOM" id="CLU_058591_0_2_6"/>
<dbReference type="GO" id="GO:0022627">
    <property type="term" value="C:cytosolic small ribosomal subunit"/>
    <property type="evidence" value="ECO:0007669"/>
    <property type="project" value="TreeGrafter"/>
</dbReference>
<dbReference type="GO" id="GO:0003729">
    <property type="term" value="F:mRNA binding"/>
    <property type="evidence" value="ECO:0007669"/>
    <property type="project" value="UniProtKB-UniRule"/>
</dbReference>
<dbReference type="GO" id="GO:0019843">
    <property type="term" value="F:rRNA binding"/>
    <property type="evidence" value="ECO:0007669"/>
    <property type="project" value="UniProtKB-UniRule"/>
</dbReference>
<dbReference type="GO" id="GO:0003735">
    <property type="term" value="F:structural constituent of ribosome"/>
    <property type="evidence" value="ECO:0007669"/>
    <property type="project" value="InterPro"/>
</dbReference>
<dbReference type="GO" id="GO:0006412">
    <property type="term" value="P:translation"/>
    <property type="evidence" value="ECO:0007669"/>
    <property type="project" value="UniProtKB-UniRule"/>
</dbReference>
<dbReference type="CDD" id="cd02412">
    <property type="entry name" value="KH-II_30S_S3"/>
    <property type="match status" value="1"/>
</dbReference>
<dbReference type="FunFam" id="3.30.1140.32:FF:000001">
    <property type="entry name" value="30S ribosomal protein S3"/>
    <property type="match status" value="1"/>
</dbReference>
<dbReference type="FunFam" id="3.30.300.20:FF:000001">
    <property type="entry name" value="30S ribosomal protein S3"/>
    <property type="match status" value="1"/>
</dbReference>
<dbReference type="Gene3D" id="3.30.300.20">
    <property type="match status" value="1"/>
</dbReference>
<dbReference type="Gene3D" id="3.30.1140.32">
    <property type="entry name" value="Ribosomal protein S3, C-terminal domain"/>
    <property type="match status" value="1"/>
</dbReference>
<dbReference type="HAMAP" id="MF_01309_B">
    <property type="entry name" value="Ribosomal_uS3_B"/>
    <property type="match status" value="1"/>
</dbReference>
<dbReference type="InterPro" id="IPR004087">
    <property type="entry name" value="KH_dom"/>
</dbReference>
<dbReference type="InterPro" id="IPR015946">
    <property type="entry name" value="KH_dom-like_a/b"/>
</dbReference>
<dbReference type="InterPro" id="IPR004044">
    <property type="entry name" value="KH_dom_type_2"/>
</dbReference>
<dbReference type="InterPro" id="IPR009019">
    <property type="entry name" value="KH_sf_prok-type"/>
</dbReference>
<dbReference type="InterPro" id="IPR036419">
    <property type="entry name" value="Ribosomal_S3_C_sf"/>
</dbReference>
<dbReference type="InterPro" id="IPR005704">
    <property type="entry name" value="Ribosomal_uS3_bac-typ"/>
</dbReference>
<dbReference type="InterPro" id="IPR001351">
    <property type="entry name" value="Ribosomal_uS3_C"/>
</dbReference>
<dbReference type="InterPro" id="IPR018280">
    <property type="entry name" value="Ribosomal_uS3_CS"/>
</dbReference>
<dbReference type="NCBIfam" id="TIGR01009">
    <property type="entry name" value="rpsC_bact"/>
    <property type="match status" value="1"/>
</dbReference>
<dbReference type="PANTHER" id="PTHR11760">
    <property type="entry name" value="30S/40S RIBOSOMAL PROTEIN S3"/>
    <property type="match status" value="1"/>
</dbReference>
<dbReference type="PANTHER" id="PTHR11760:SF19">
    <property type="entry name" value="SMALL RIBOSOMAL SUBUNIT PROTEIN US3C"/>
    <property type="match status" value="1"/>
</dbReference>
<dbReference type="Pfam" id="PF07650">
    <property type="entry name" value="KH_2"/>
    <property type="match status" value="1"/>
</dbReference>
<dbReference type="Pfam" id="PF00189">
    <property type="entry name" value="Ribosomal_S3_C"/>
    <property type="match status" value="1"/>
</dbReference>
<dbReference type="SMART" id="SM00322">
    <property type="entry name" value="KH"/>
    <property type="match status" value="1"/>
</dbReference>
<dbReference type="SUPFAM" id="SSF54814">
    <property type="entry name" value="Prokaryotic type KH domain (KH-domain type II)"/>
    <property type="match status" value="1"/>
</dbReference>
<dbReference type="SUPFAM" id="SSF54821">
    <property type="entry name" value="Ribosomal protein S3 C-terminal domain"/>
    <property type="match status" value="1"/>
</dbReference>
<dbReference type="PROSITE" id="PS50823">
    <property type="entry name" value="KH_TYPE_2"/>
    <property type="match status" value="1"/>
</dbReference>
<dbReference type="PROSITE" id="PS00548">
    <property type="entry name" value="RIBOSOMAL_S3"/>
    <property type="match status" value="1"/>
</dbReference>